<accession>Q3JW79</accession>
<feature type="chain" id="PRO_0000258947" description="Nucleotide-binding protein BURPS1710b_0761">
    <location>
        <begin position="1"/>
        <end position="297"/>
    </location>
</feature>
<feature type="binding site" evidence="1">
    <location>
        <begin position="8"/>
        <end position="15"/>
    </location>
    <ligand>
        <name>ATP</name>
        <dbReference type="ChEBI" id="CHEBI:30616"/>
    </ligand>
</feature>
<feature type="binding site" evidence="1">
    <location>
        <begin position="57"/>
        <end position="60"/>
    </location>
    <ligand>
        <name>GTP</name>
        <dbReference type="ChEBI" id="CHEBI:37565"/>
    </ligand>
</feature>
<protein>
    <recommendedName>
        <fullName evidence="1">Nucleotide-binding protein BURPS1710b_0761</fullName>
    </recommendedName>
</protein>
<proteinExistence type="inferred from homology"/>
<sequence>MRIVLITGISGSGKSVALNALEDAGYYCVDNLPPHVLPELARYLAHEGQNRLAVAIDARSSASLDEMPGLIRALSHEHDVRVLFLNASTQALIQRFSETRRRHPLSGSPSHDADVGLLVSLEEAIERERELVAPLAEFGHQIDTSNLRANVLRTWVKRFIEQKNDDLVLMFESFGFKRGVPLDADFMFDVRALPNPYYDHELRPLTGLDQPVVAFLDALPVVHQMLDDIETFLVKWLPHFREDNRSYLTVAIGCTGGQHRSVFLAETLAARLSRQASVIVRHRDAPVAVDASSRLVT</sequence>
<comment type="function">
    <text evidence="1">Displays ATPase and GTPase activities.</text>
</comment>
<comment type="similarity">
    <text evidence="1">Belongs to the RapZ-like family.</text>
</comment>
<organism>
    <name type="scientific">Burkholderia pseudomallei (strain 1710b)</name>
    <dbReference type="NCBI Taxonomy" id="320372"/>
    <lineage>
        <taxon>Bacteria</taxon>
        <taxon>Pseudomonadati</taxon>
        <taxon>Pseudomonadota</taxon>
        <taxon>Betaproteobacteria</taxon>
        <taxon>Burkholderiales</taxon>
        <taxon>Burkholderiaceae</taxon>
        <taxon>Burkholderia</taxon>
        <taxon>pseudomallei group</taxon>
    </lineage>
</organism>
<name>Y761_BURP1</name>
<reference key="1">
    <citation type="journal article" date="2010" name="Genome Biol. Evol.">
        <title>Continuing evolution of Burkholderia mallei through genome reduction and large-scale rearrangements.</title>
        <authorList>
            <person name="Losada L."/>
            <person name="Ronning C.M."/>
            <person name="DeShazer D."/>
            <person name="Woods D."/>
            <person name="Fedorova N."/>
            <person name="Kim H.S."/>
            <person name="Shabalina S.A."/>
            <person name="Pearson T.R."/>
            <person name="Brinkac L."/>
            <person name="Tan P."/>
            <person name="Nandi T."/>
            <person name="Crabtree J."/>
            <person name="Badger J."/>
            <person name="Beckstrom-Sternberg S."/>
            <person name="Saqib M."/>
            <person name="Schutzer S.E."/>
            <person name="Keim P."/>
            <person name="Nierman W.C."/>
        </authorList>
    </citation>
    <scope>NUCLEOTIDE SEQUENCE [LARGE SCALE GENOMIC DNA]</scope>
    <source>
        <strain>1710b</strain>
    </source>
</reference>
<evidence type="ECO:0000255" key="1">
    <source>
        <dbReference type="HAMAP-Rule" id="MF_00636"/>
    </source>
</evidence>
<dbReference type="EMBL" id="CP000124">
    <property type="protein sequence ID" value="ABA49684.1"/>
    <property type="molecule type" value="Genomic_DNA"/>
</dbReference>
<dbReference type="SMR" id="Q3JW79"/>
<dbReference type="EnsemblBacteria" id="ABA49684">
    <property type="protein sequence ID" value="ABA49684"/>
    <property type="gene ID" value="BURPS1710b_0761"/>
</dbReference>
<dbReference type="KEGG" id="bpm:BURPS1710b_0761"/>
<dbReference type="HOGENOM" id="CLU_059558_1_1_4"/>
<dbReference type="Proteomes" id="UP000002700">
    <property type="component" value="Chromosome I"/>
</dbReference>
<dbReference type="GO" id="GO:0005524">
    <property type="term" value="F:ATP binding"/>
    <property type="evidence" value="ECO:0007669"/>
    <property type="project" value="UniProtKB-UniRule"/>
</dbReference>
<dbReference type="GO" id="GO:0005525">
    <property type="term" value="F:GTP binding"/>
    <property type="evidence" value="ECO:0007669"/>
    <property type="project" value="UniProtKB-UniRule"/>
</dbReference>
<dbReference type="Gene3D" id="3.40.50.300">
    <property type="entry name" value="P-loop containing nucleotide triphosphate hydrolases"/>
    <property type="match status" value="1"/>
</dbReference>
<dbReference type="HAMAP" id="MF_00636">
    <property type="entry name" value="RapZ_like"/>
    <property type="match status" value="1"/>
</dbReference>
<dbReference type="InterPro" id="IPR027417">
    <property type="entry name" value="P-loop_NTPase"/>
</dbReference>
<dbReference type="InterPro" id="IPR005337">
    <property type="entry name" value="RapZ-like"/>
</dbReference>
<dbReference type="InterPro" id="IPR053930">
    <property type="entry name" value="RapZ-like_N"/>
</dbReference>
<dbReference type="InterPro" id="IPR053931">
    <property type="entry name" value="RapZ_C"/>
</dbReference>
<dbReference type="NCBIfam" id="NF003828">
    <property type="entry name" value="PRK05416.1"/>
    <property type="match status" value="1"/>
</dbReference>
<dbReference type="PANTHER" id="PTHR30448">
    <property type="entry name" value="RNASE ADAPTER PROTEIN RAPZ"/>
    <property type="match status" value="1"/>
</dbReference>
<dbReference type="PANTHER" id="PTHR30448:SF0">
    <property type="entry name" value="RNASE ADAPTER PROTEIN RAPZ"/>
    <property type="match status" value="1"/>
</dbReference>
<dbReference type="Pfam" id="PF22740">
    <property type="entry name" value="PapZ_C"/>
    <property type="match status" value="1"/>
</dbReference>
<dbReference type="Pfam" id="PF03668">
    <property type="entry name" value="RapZ-like_N"/>
    <property type="match status" value="1"/>
</dbReference>
<dbReference type="PIRSF" id="PIRSF005052">
    <property type="entry name" value="P-loopkin"/>
    <property type="match status" value="1"/>
</dbReference>
<dbReference type="SUPFAM" id="SSF52540">
    <property type="entry name" value="P-loop containing nucleoside triphosphate hydrolases"/>
    <property type="match status" value="1"/>
</dbReference>
<gene>
    <name type="ordered locus">BURPS1710b_0761</name>
</gene>
<keyword id="KW-0067">ATP-binding</keyword>
<keyword id="KW-0342">GTP-binding</keyword>
<keyword id="KW-0547">Nucleotide-binding</keyword>